<keyword id="KW-0315">Glutamine amidotransferase</keyword>
<keyword id="KW-1185">Reference proteome</keyword>
<keyword id="KW-0808">Transferase</keyword>
<proteinExistence type="predicted"/>
<name>Y713_RICPR</name>
<reference key="1">
    <citation type="journal article" date="1998" name="Nature">
        <title>The genome sequence of Rickettsia prowazekii and the origin of mitochondria.</title>
        <authorList>
            <person name="Andersson S.G.E."/>
            <person name="Zomorodipour A."/>
            <person name="Andersson J.O."/>
            <person name="Sicheritz-Ponten T."/>
            <person name="Alsmark U.C.M."/>
            <person name="Podowski R.M."/>
            <person name="Naeslund A.K."/>
            <person name="Eriksson A.-S."/>
            <person name="Winkler H.H."/>
            <person name="Kurland C.G."/>
        </authorList>
    </citation>
    <scope>NUCLEOTIDE SEQUENCE [LARGE SCALE GENOMIC DNA]</scope>
    <source>
        <strain>Madrid E</strain>
    </source>
</reference>
<evidence type="ECO:0000255" key="1">
    <source>
        <dbReference type="PROSITE-ProRule" id="PRU00605"/>
    </source>
</evidence>
<sequence>MLSYNIDIGGITALSIMTELATSHKTKIVIANYLEIVPTIANPNSLFMYMYDDIKQCIYINFSIPETLKIFSEAKNNARKALQNSDGLIIPGNVNMVDARLFGEVISPNDVKLHNLERNIAEMALIHVATQRGIPILGICGGIKFLILILVARSVITVKIIIYM</sequence>
<feature type="chain" id="PRO_0000101410" description="Putative glutamine amidotransferase-like protein RP713">
    <location>
        <begin position="1"/>
        <end position="164"/>
    </location>
</feature>
<feature type="domain" description="Glutamine amidotransferase type-1" evidence="1">
    <location>
        <begin position="39"/>
        <end position="164"/>
    </location>
</feature>
<gene>
    <name type="ordered locus">RP713</name>
</gene>
<organism>
    <name type="scientific">Rickettsia prowazekii (strain Madrid E)</name>
    <dbReference type="NCBI Taxonomy" id="272947"/>
    <lineage>
        <taxon>Bacteria</taxon>
        <taxon>Pseudomonadati</taxon>
        <taxon>Pseudomonadota</taxon>
        <taxon>Alphaproteobacteria</taxon>
        <taxon>Rickettsiales</taxon>
        <taxon>Rickettsiaceae</taxon>
        <taxon>Rickettsieae</taxon>
        <taxon>Rickettsia</taxon>
        <taxon>typhus group</taxon>
    </lineage>
</organism>
<protein>
    <recommendedName>
        <fullName>Putative glutamine amidotransferase-like protein RP713</fullName>
    </recommendedName>
</protein>
<dbReference type="EMBL" id="AJ235273">
    <property type="protein sequence ID" value="CAA15146.1"/>
    <property type="molecule type" value="Genomic_DNA"/>
</dbReference>
<dbReference type="PIR" id="B71631">
    <property type="entry name" value="B71631"/>
</dbReference>
<dbReference type="RefSeq" id="NP_221070.1">
    <property type="nucleotide sequence ID" value="NC_000963.1"/>
</dbReference>
<dbReference type="SMR" id="Q9ZCL4"/>
<dbReference type="STRING" id="272947.gene:17555787"/>
<dbReference type="EnsemblBacteria" id="CAA15146">
    <property type="protein sequence ID" value="CAA15146"/>
    <property type="gene ID" value="CAA15146"/>
</dbReference>
<dbReference type="KEGG" id="rpr:RP713"/>
<dbReference type="PATRIC" id="fig|272947.5.peg.741"/>
<dbReference type="eggNOG" id="COG2071">
    <property type="taxonomic scope" value="Bacteria"/>
</dbReference>
<dbReference type="HOGENOM" id="CLU_1617747_0_0_5"/>
<dbReference type="OrthoDB" id="9813383at2"/>
<dbReference type="Proteomes" id="UP000002480">
    <property type="component" value="Chromosome"/>
</dbReference>
<dbReference type="GO" id="GO:0016787">
    <property type="term" value="F:hydrolase activity"/>
    <property type="evidence" value="ECO:0007669"/>
    <property type="project" value="InterPro"/>
</dbReference>
<dbReference type="GO" id="GO:0016740">
    <property type="term" value="F:transferase activity"/>
    <property type="evidence" value="ECO:0007669"/>
    <property type="project" value="UniProtKB-KW"/>
</dbReference>
<dbReference type="Gene3D" id="3.40.50.880">
    <property type="match status" value="1"/>
</dbReference>
<dbReference type="InterPro" id="IPR029062">
    <property type="entry name" value="Class_I_gatase-like"/>
</dbReference>
<dbReference type="InterPro" id="IPR011697">
    <property type="entry name" value="Peptidase_C26"/>
</dbReference>
<dbReference type="Pfam" id="PF07722">
    <property type="entry name" value="Peptidase_C26"/>
    <property type="match status" value="1"/>
</dbReference>
<dbReference type="SUPFAM" id="SSF52317">
    <property type="entry name" value="Class I glutamine amidotransferase-like"/>
    <property type="match status" value="1"/>
</dbReference>
<dbReference type="PROSITE" id="PS51273">
    <property type="entry name" value="GATASE_TYPE_1"/>
    <property type="match status" value="1"/>
</dbReference>
<accession>Q9ZCL4</accession>